<sequence>MTEIVDIIAREILDSRGNPTVEVDVILEDGAFGRAAVPSGASTGAHEANEKRDGDKARYLGKGVQQAVDAVNGEIFDALSGVDAEDQRRVDNLMIELDGTPNKARLGANAILGVSLATAKAAAESAGLPLYKYVGGVNARVLPTPMMNIINGGAHADNPIDIQEFMILPTGAKDFREGLRMGAEIFHALKKALKDAGHNTNVGDEGGFAPNLASAEAALDFIVKAGEKAGYKAGDDFVLGLDVASTEFFKNGKYELEGEGKSLDPAAMVDYLAGLVAKFPILTIEDGMAEDDFDGWKLLTDTLGKKVQLVGDDLFVTNPKRLQMGLDKGLANSILVKVNQIGTLSETIDAVELAHRHGYTSVMSHRSGETEDSTIADLAVALNCGQIKTGSLARSDRTAKYNQLLRIQEMLDDQGVYAGRAALKGR</sequence>
<dbReference type="EC" id="4.2.1.11" evidence="1"/>
<dbReference type="EMBL" id="CP001340">
    <property type="protein sequence ID" value="ACL95260.1"/>
    <property type="molecule type" value="Genomic_DNA"/>
</dbReference>
<dbReference type="RefSeq" id="WP_010919592.1">
    <property type="nucleotide sequence ID" value="NC_011916.1"/>
</dbReference>
<dbReference type="RefSeq" id="YP_002517168.1">
    <property type="nucleotide sequence ID" value="NC_011916.1"/>
</dbReference>
<dbReference type="SMR" id="B8GW68"/>
<dbReference type="GeneID" id="7331261"/>
<dbReference type="KEGG" id="ccs:CCNA_01795"/>
<dbReference type="PATRIC" id="fig|565050.3.peg.1767"/>
<dbReference type="HOGENOM" id="CLU_031223_2_1_5"/>
<dbReference type="OrthoDB" id="9804716at2"/>
<dbReference type="PhylomeDB" id="B8GW68"/>
<dbReference type="UniPathway" id="UPA00109">
    <property type="reaction ID" value="UER00187"/>
</dbReference>
<dbReference type="Proteomes" id="UP000001364">
    <property type="component" value="Chromosome"/>
</dbReference>
<dbReference type="GO" id="GO:0009986">
    <property type="term" value="C:cell surface"/>
    <property type="evidence" value="ECO:0007669"/>
    <property type="project" value="UniProtKB-SubCell"/>
</dbReference>
<dbReference type="GO" id="GO:0005576">
    <property type="term" value="C:extracellular region"/>
    <property type="evidence" value="ECO:0007669"/>
    <property type="project" value="UniProtKB-SubCell"/>
</dbReference>
<dbReference type="GO" id="GO:0000015">
    <property type="term" value="C:phosphopyruvate hydratase complex"/>
    <property type="evidence" value="ECO:0007669"/>
    <property type="project" value="InterPro"/>
</dbReference>
<dbReference type="GO" id="GO:0000287">
    <property type="term" value="F:magnesium ion binding"/>
    <property type="evidence" value="ECO:0007669"/>
    <property type="project" value="UniProtKB-UniRule"/>
</dbReference>
<dbReference type="GO" id="GO:0004634">
    <property type="term" value="F:phosphopyruvate hydratase activity"/>
    <property type="evidence" value="ECO:0007669"/>
    <property type="project" value="UniProtKB-UniRule"/>
</dbReference>
<dbReference type="GO" id="GO:0006096">
    <property type="term" value="P:glycolytic process"/>
    <property type="evidence" value="ECO:0007669"/>
    <property type="project" value="UniProtKB-UniRule"/>
</dbReference>
<dbReference type="CDD" id="cd03313">
    <property type="entry name" value="enolase"/>
    <property type="match status" value="1"/>
</dbReference>
<dbReference type="FunFam" id="3.20.20.120:FF:000001">
    <property type="entry name" value="Enolase"/>
    <property type="match status" value="1"/>
</dbReference>
<dbReference type="FunFam" id="3.30.390.10:FF:000001">
    <property type="entry name" value="Enolase"/>
    <property type="match status" value="1"/>
</dbReference>
<dbReference type="Gene3D" id="3.20.20.120">
    <property type="entry name" value="Enolase-like C-terminal domain"/>
    <property type="match status" value="1"/>
</dbReference>
<dbReference type="Gene3D" id="3.30.390.10">
    <property type="entry name" value="Enolase-like, N-terminal domain"/>
    <property type="match status" value="1"/>
</dbReference>
<dbReference type="HAMAP" id="MF_00318">
    <property type="entry name" value="Enolase"/>
    <property type="match status" value="1"/>
</dbReference>
<dbReference type="InterPro" id="IPR000941">
    <property type="entry name" value="Enolase"/>
</dbReference>
<dbReference type="InterPro" id="IPR036849">
    <property type="entry name" value="Enolase-like_C_sf"/>
</dbReference>
<dbReference type="InterPro" id="IPR029017">
    <property type="entry name" value="Enolase-like_N"/>
</dbReference>
<dbReference type="InterPro" id="IPR020810">
    <property type="entry name" value="Enolase_C"/>
</dbReference>
<dbReference type="InterPro" id="IPR020809">
    <property type="entry name" value="Enolase_CS"/>
</dbReference>
<dbReference type="InterPro" id="IPR020811">
    <property type="entry name" value="Enolase_N"/>
</dbReference>
<dbReference type="NCBIfam" id="TIGR01060">
    <property type="entry name" value="eno"/>
    <property type="match status" value="1"/>
</dbReference>
<dbReference type="PANTHER" id="PTHR11902">
    <property type="entry name" value="ENOLASE"/>
    <property type="match status" value="1"/>
</dbReference>
<dbReference type="PANTHER" id="PTHR11902:SF1">
    <property type="entry name" value="ENOLASE"/>
    <property type="match status" value="1"/>
</dbReference>
<dbReference type="Pfam" id="PF00113">
    <property type="entry name" value="Enolase_C"/>
    <property type="match status" value="1"/>
</dbReference>
<dbReference type="Pfam" id="PF03952">
    <property type="entry name" value="Enolase_N"/>
    <property type="match status" value="1"/>
</dbReference>
<dbReference type="PIRSF" id="PIRSF001400">
    <property type="entry name" value="Enolase"/>
    <property type="match status" value="1"/>
</dbReference>
<dbReference type="PRINTS" id="PR00148">
    <property type="entry name" value="ENOLASE"/>
</dbReference>
<dbReference type="SFLD" id="SFLDF00002">
    <property type="entry name" value="enolase"/>
    <property type="match status" value="1"/>
</dbReference>
<dbReference type="SFLD" id="SFLDG00178">
    <property type="entry name" value="enolase"/>
    <property type="match status" value="1"/>
</dbReference>
<dbReference type="SMART" id="SM01192">
    <property type="entry name" value="Enolase_C"/>
    <property type="match status" value="1"/>
</dbReference>
<dbReference type="SMART" id="SM01193">
    <property type="entry name" value="Enolase_N"/>
    <property type="match status" value="1"/>
</dbReference>
<dbReference type="SUPFAM" id="SSF51604">
    <property type="entry name" value="Enolase C-terminal domain-like"/>
    <property type="match status" value="1"/>
</dbReference>
<dbReference type="SUPFAM" id="SSF54826">
    <property type="entry name" value="Enolase N-terminal domain-like"/>
    <property type="match status" value="1"/>
</dbReference>
<dbReference type="PROSITE" id="PS00164">
    <property type="entry name" value="ENOLASE"/>
    <property type="match status" value="1"/>
</dbReference>
<comment type="function">
    <text evidence="1">Catalyzes the reversible conversion of 2-phosphoglycerate (2-PG) into phosphoenolpyruvate (PEP). It is essential for the degradation of carbohydrates via glycolysis.</text>
</comment>
<comment type="catalytic activity">
    <reaction evidence="1">
        <text>(2R)-2-phosphoglycerate = phosphoenolpyruvate + H2O</text>
        <dbReference type="Rhea" id="RHEA:10164"/>
        <dbReference type="ChEBI" id="CHEBI:15377"/>
        <dbReference type="ChEBI" id="CHEBI:58289"/>
        <dbReference type="ChEBI" id="CHEBI:58702"/>
        <dbReference type="EC" id="4.2.1.11"/>
    </reaction>
</comment>
<comment type="cofactor">
    <cofactor evidence="1">
        <name>Mg(2+)</name>
        <dbReference type="ChEBI" id="CHEBI:18420"/>
    </cofactor>
    <text evidence="1">Binds a second Mg(2+) ion via substrate during catalysis.</text>
</comment>
<comment type="pathway">
    <text evidence="1">Carbohydrate degradation; glycolysis; pyruvate from D-glyceraldehyde 3-phosphate: step 4/5.</text>
</comment>
<comment type="subcellular location">
    <subcellularLocation>
        <location evidence="1">Cytoplasm</location>
    </subcellularLocation>
    <subcellularLocation>
        <location evidence="1">Secreted</location>
    </subcellularLocation>
    <subcellularLocation>
        <location evidence="1">Cell surface</location>
    </subcellularLocation>
    <text evidence="1">Fractions of enolase are present in both the cytoplasm and on the cell surface.</text>
</comment>
<comment type="similarity">
    <text evidence="1">Belongs to the enolase family.</text>
</comment>
<protein>
    <recommendedName>
        <fullName evidence="1">Enolase</fullName>
        <ecNumber evidence="1">4.2.1.11</ecNumber>
    </recommendedName>
    <alternativeName>
        <fullName evidence="1">2-phospho-D-glycerate hydro-lyase</fullName>
    </alternativeName>
    <alternativeName>
        <fullName evidence="1">2-phosphoglycerate dehydratase</fullName>
    </alternativeName>
</protein>
<reference key="1">
    <citation type="journal article" date="2010" name="J. Bacteriol.">
        <title>The genetic basis of laboratory adaptation in Caulobacter crescentus.</title>
        <authorList>
            <person name="Marks M.E."/>
            <person name="Castro-Rojas C.M."/>
            <person name="Teiling C."/>
            <person name="Du L."/>
            <person name="Kapatral V."/>
            <person name="Walunas T.L."/>
            <person name="Crosson S."/>
        </authorList>
    </citation>
    <scope>NUCLEOTIDE SEQUENCE [LARGE SCALE GENOMIC DNA]</scope>
    <source>
        <strain>NA1000 / CB15N</strain>
    </source>
</reference>
<proteinExistence type="inferred from homology"/>
<name>ENO_CAUVN</name>
<gene>
    <name evidence="1" type="primary">eno</name>
    <name type="ordered locus">CCNA_01795</name>
</gene>
<evidence type="ECO:0000255" key="1">
    <source>
        <dbReference type="HAMAP-Rule" id="MF_00318"/>
    </source>
</evidence>
<organism>
    <name type="scientific">Caulobacter vibrioides (strain NA1000 / CB15N)</name>
    <name type="common">Caulobacter crescentus</name>
    <dbReference type="NCBI Taxonomy" id="565050"/>
    <lineage>
        <taxon>Bacteria</taxon>
        <taxon>Pseudomonadati</taxon>
        <taxon>Pseudomonadota</taxon>
        <taxon>Alphaproteobacteria</taxon>
        <taxon>Caulobacterales</taxon>
        <taxon>Caulobacteraceae</taxon>
        <taxon>Caulobacter</taxon>
    </lineage>
</organism>
<keyword id="KW-0963">Cytoplasm</keyword>
<keyword id="KW-0324">Glycolysis</keyword>
<keyword id="KW-0456">Lyase</keyword>
<keyword id="KW-0460">Magnesium</keyword>
<keyword id="KW-0479">Metal-binding</keyword>
<keyword id="KW-1185">Reference proteome</keyword>
<keyword id="KW-0964">Secreted</keyword>
<feature type="chain" id="PRO_1000132992" description="Enolase">
    <location>
        <begin position="1"/>
        <end position="426"/>
    </location>
</feature>
<feature type="active site" description="Proton donor" evidence="1">
    <location>
        <position position="205"/>
    </location>
</feature>
<feature type="active site" description="Proton acceptor" evidence="1">
    <location>
        <position position="337"/>
    </location>
</feature>
<feature type="binding site" evidence="1">
    <location>
        <position position="163"/>
    </location>
    <ligand>
        <name>(2R)-2-phosphoglycerate</name>
        <dbReference type="ChEBI" id="CHEBI:58289"/>
    </ligand>
</feature>
<feature type="binding site" evidence="1">
    <location>
        <position position="242"/>
    </location>
    <ligand>
        <name>Mg(2+)</name>
        <dbReference type="ChEBI" id="CHEBI:18420"/>
    </ligand>
</feature>
<feature type="binding site" evidence="1">
    <location>
        <position position="285"/>
    </location>
    <ligand>
        <name>Mg(2+)</name>
        <dbReference type="ChEBI" id="CHEBI:18420"/>
    </ligand>
</feature>
<feature type="binding site" evidence="1">
    <location>
        <position position="312"/>
    </location>
    <ligand>
        <name>Mg(2+)</name>
        <dbReference type="ChEBI" id="CHEBI:18420"/>
    </ligand>
</feature>
<feature type="binding site" evidence="1">
    <location>
        <position position="337"/>
    </location>
    <ligand>
        <name>(2R)-2-phosphoglycerate</name>
        <dbReference type="ChEBI" id="CHEBI:58289"/>
    </ligand>
</feature>
<feature type="binding site" evidence="1">
    <location>
        <position position="366"/>
    </location>
    <ligand>
        <name>(2R)-2-phosphoglycerate</name>
        <dbReference type="ChEBI" id="CHEBI:58289"/>
    </ligand>
</feature>
<feature type="binding site" evidence="1">
    <location>
        <position position="367"/>
    </location>
    <ligand>
        <name>(2R)-2-phosphoglycerate</name>
        <dbReference type="ChEBI" id="CHEBI:58289"/>
    </ligand>
</feature>
<feature type="binding site" evidence="1">
    <location>
        <position position="388"/>
    </location>
    <ligand>
        <name>(2R)-2-phosphoglycerate</name>
        <dbReference type="ChEBI" id="CHEBI:58289"/>
    </ligand>
</feature>
<accession>B8GW68</accession>